<keyword id="KW-0963">Cytoplasm</keyword>
<keyword id="KW-0501">Molybdenum cofactor biosynthesis</keyword>
<keyword id="KW-0547">Nucleotide-binding</keyword>
<keyword id="KW-0597">Phosphoprotein</keyword>
<feature type="chain" id="PRO_0000369320" description="Molybdopterin synthase sulfur carrier subunit">
    <location>
        <begin position="1"/>
        <end position="83"/>
    </location>
</feature>
<feature type="modified residue" description="1-thioglycine; alternate" evidence="1">
    <location>
        <position position="83"/>
    </location>
</feature>
<feature type="modified residue" description="Glycyl adenylate; alternate" evidence="1">
    <location>
        <position position="83"/>
    </location>
</feature>
<sequence>MQIKVLYFAKSREVAGVNEQTFELGDGAHTEDLLAQIIAAHPALDSVMKTCVFALNQEYVRPQDKEALKDGDEVAIIPPLSGG</sequence>
<name>MOC2A_CHLRE</name>
<proteinExistence type="inferred from homology"/>
<accession>A8JJB2</accession>
<gene>
    <name type="ORF">CHLREDRAFT_109356</name>
</gene>
<comment type="function">
    <text evidence="1">Acts as a sulfur carrier required for molybdopterin biosynthesis. Component of the molybdopterin synthase complex that catalyzes the conversion of precursor Z into molybdopterin by mediating the incorporation of 2 sulfur atoms into precursor Z to generate a dithiolene group. In the complex, serves as sulfur donor by being thiocarboxylated (-COSH) at its C-terminus by MOCS3. After interaction with MOCS2B, the sulfur is then transferred to precursor Z to form molybdopterin.</text>
</comment>
<comment type="pathway">
    <text evidence="1">Cofactor biosynthesis; molybdopterin biosynthesis.</text>
</comment>
<comment type="subunit">
    <text evidence="1">Heterotetramer; composed of 2 small (MOCS2A) and 2 large (MOCS2B) subunits.</text>
</comment>
<comment type="subcellular location">
    <subcellularLocation>
        <location evidence="1">Cytoplasm</location>
    </subcellularLocation>
</comment>
<comment type="PTM">
    <text evidence="1">C-terminal thiocarboxylation occurs in 2 steps, it is first acyl-adenylated (-COAMP) via the hesA/moeB/thiF part of MOCS3, then thiocarboxylated (-COSH) via the rhodanese domain of MOCS3.</text>
</comment>
<comment type="similarity">
    <text evidence="1">Belongs to the MoaD family. MOCS2A subfamily.</text>
</comment>
<reference key="1">
    <citation type="journal article" date="2007" name="Science">
        <title>The Chlamydomonas genome reveals the evolution of key animal and plant functions.</title>
        <authorList>
            <person name="Merchant S.S."/>
            <person name="Prochnik S.E."/>
            <person name="Vallon O."/>
            <person name="Harris E.H."/>
            <person name="Karpowicz S.J."/>
            <person name="Witman G.B."/>
            <person name="Terry A."/>
            <person name="Salamov A."/>
            <person name="Fritz-Laylin L.K."/>
            <person name="Marechal-Drouard L."/>
            <person name="Marshall W.F."/>
            <person name="Qu L.H."/>
            <person name="Nelson D.R."/>
            <person name="Sanderfoot A.A."/>
            <person name="Spalding M.H."/>
            <person name="Kapitonov V.V."/>
            <person name="Ren Q."/>
            <person name="Ferris P."/>
            <person name="Lindquist E."/>
            <person name="Shapiro H."/>
            <person name="Lucas S.M."/>
            <person name="Grimwood J."/>
            <person name="Schmutz J."/>
            <person name="Cardol P."/>
            <person name="Cerutti H."/>
            <person name="Chanfreau G."/>
            <person name="Chen C.L."/>
            <person name="Cognat V."/>
            <person name="Croft M.T."/>
            <person name="Dent R."/>
            <person name="Dutcher S."/>
            <person name="Fernandez E."/>
            <person name="Fukuzawa H."/>
            <person name="Gonzalez-Ballester D."/>
            <person name="Gonzalez-Halphen D."/>
            <person name="Hallmann A."/>
            <person name="Hanikenne M."/>
            <person name="Hippler M."/>
            <person name="Inwood W."/>
            <person name="Jabbari K."/>
            <person name="Kalanon M."/>
            <person name="Kuras R."/>
            <person name="Lefebvre P.A."/>
            <person name="Lemaire S.D."/>
            <person name="Lobanov A.V."/>
            <person name="Lohr M."/>
            <person name="Manuell A."/>
            <person name="Meier I."/>
            <person name="Mets L."/>
            <person name="Mittag M."/>
            <person name="Mittelmeier T."/>
            <person name="Moroney J.V."/>
            <person name="Moseley J."/>
            <person name="Napoli C."/>
            <person name="Nedelcu A.M."/>
            <person name="Niyogi K."/>
            <person name="Novoselov S.V."/>
            <person name="Paulsen I.T."/>
            <person name="Pazour G.J."/>
            <person name="Purton S."/>
            <person name="Ral J.P."/>
            <person name="Riano-Pachon D.M."/>
            <person name="Riekhof W."/>
            <person name="Rymarquis L."/>
            <person name="Schroda M."/>
            <person name="Stern D."/>
            <person name="Umen J."/>
            <person name="Willows R."/>
            <person name="Wilson N."/>
            <person name="Zimmer S.L."/>
            <person name="Allmer J."/>
            <person name="Balk J."/>
            <person name="Bisova K."/>
            <person name="Chen C.J."/>
            <person name="Elias M."/>
            <person name="Gendler K."/>
            <person name="Hauser C."/>
            <person name="Lamb M.R."/>
            <person name="Ledford H."/>
            <person name="Long J.C."/>
            <person name="Minagawa J."/>
            <person name="Page M.D."/>
            <person name="Pan J."/>
            <person name="Pootakham W."/>
            <person name="Roje S."/>
            <person name="Rose A."/>
            <person name="Stahlberg E."/>
            <person name="Terauchi A.M."/>
            <person name="Yang P."/>
            <person name="Ball S."/>
            <person name="Bowler C."/>
            <person name="Dieckmann C.L."/>
            <person name="Gladyshev V.N."/>
            <person name="Green P."/>
            <person name="Jorgensen R."/>
            <person name="Mayfield S."/>
            <person name="Mueller-Roeber B."/>
            <person name="Rajamani S."/>
            <person name="Sayre R.T."/>
            <person name="Brokstein P."/>
            <person name="Dubchak I."/>
            <person name="Goodstein D."/>
            <person name="Hornick L."/>
            <person name="Huang Y.W."/>
            <person name="Jhaveri J."/>
            <person name="Luo Y."/>
            <person name="Martinez D."/>
            <person name="Ngau W.C."/>
            <person name="Otillar B."/>
            <person name="Poliakov A."/>
            <person name="Porter A."/>
            <person name="Szajkowski L."/>
            <person name="Werner G."/>
            <person name="Zhou K."/>
            <person name="Grigoriev I.V."/>
            <person name="Rokhsar D.S."/>
            <person name="Grossman A.R."/>
        </authorList>
    </citation>
    <scope>NUCLEOTIDE SEQUENCE [LARGE SCALE GENOMIC DNA]</scope>
    <source>
        <strain>CC-503</strain>
        <strain>cw92</strain>
    </source>
</reference>
<evidence type="ECO:0000255" key="1">
    <source>
        <dbReference type="HAMAP-Rule" id="MF_03051"/>
    </source>
</evidence>
<dbReference type="EMBL" id="DS496405">
    <property type="protein sequence ID" value="EDO96035.1"/>
    <property type="molecule type" value="Genomic_DNA"/>
</dbReference>
<dbReference type="RefSeq" id="XP_001697096.1">
    <property type="nucleotide sequence ID" value="XM_001697044.1"/>
</dbReference>
<dbReference type="SMR" id="A8JJB2"/>
<dbReference type="PaxDb" id="3055-EDO96035"/>
<dbReference type="EnsemblPlants" id="PNW80210">
    <property type="protein sequence ID" value="PNW80210"/>
    <property type="gene ID" value="CHLRE_08g382545v5"/>
</dbReference>
<dbReference type="Gramene" id="PNW80210">
    <property type="protein sequence ID" value="PNW80210"/>
    <property type="gene ID" value="CHLRE_08g382545v5"/>
</dbReference>
<dbReference type="eggNOG" id="KOG3474">
    <property type="taxonomic scope" value="Eukaryota"/>
</dbReference>
<dbReference type="HOGENOM" id="CLU_114601_4_3_1"/>
<dbReference type="OrthoDB" id="5531344at2759"/>
<dbReference type="UniPathway" id="UPA00344"/>
<dbReference type="GO" id="GO:1990140">
    <property type="term" value="C:molybdopterin synthase complex"/>
    <property type="evidence" value="ECO:0000250"/>
    <property type="project" value="UniProtKB"/>
</dbReference>
<dbReference type="GO" id="GO:0030366">
    <property type="term" value="F:molybdopterin synthase activity"/>
    <property type="evidence" value="ECO:0007669"/>
    <property type="project" value="UniProtKB-UniRule"/>
</dbReference>
<dbReference type="GO" id="GO:0000166">
    <property type="term" value="F:nucleotide binding"/>
    <property type="evidence" value="ECO:0007669"/>
    <property type="project" value="UniProtKB-KW"/>
</dbReference>
<dbReference type="GO" id="GO:0006777">
    <property type="term" value="P:Mo-molybdopterin cofactor biosynthetic process"/>
    <property type="evidence" value="ECO:0000250"/>
    <property type="project" value="UniProtKB"/>
</dbReference>
<dbReference type="CDD" id="cd00754">
    <property type="entry name" value="Ubl_MoaD"/>
    <property type="match status" value="1"/>
</dbReference>
<dbReference type="FunFam" id="3.10.20.30:FF:000010">
    <property type="entry name" value="Molybdopterin synthase sulfur carrier subunit"/>
    <property type="match status" value="1"/>
</dbReference>
<dbReference type="Gene3D" id="3.10.20.30">
    <property type="match status" value="1"/>
</dbReference>
<dbReference type="HAMAP" id="MF_03051">
    <property type="entry name" value="MOCS2A"/>
    <property type="match status" value="1"/>
</dbReference>
<dbReference type="InterPro" id="IPR012675">
    <property type="entry name" value="Beta-grasp_dom_sf"/>
</dbReference>
<dbReference type="InterPro" id="IPR010038">
    <property type="entry name" value="MoaD_arc-typ"/>
</dbReference>
<dbReference type="InterPro" id="IPR044672">
    <property type="entry name" value="MOCS2A"/>
</dbReference>
<dbReference type="InterPro" id="IPR028887">
    <property type="entry name" value="MOCS2A_euk"/>
</dbReference>
<dbReference type="InterPro" id="IPR016155">
    <property type="entry name" value="Mopterin_synth/thiamin_S_b"/>
</dbReference>
<dbReference type="InterPro" id="IPR003749">
    <property type="entry name" value="ThiS/MoaD-like"/>
</dbReference>
<dbReference type="NCBIfam" id="TIGR01682">
    <property type="entry name" value="moaD"/>
    <property type="match status" value="1"/>
</dbReference>
<dbReference type="NCBIfam" id="TIGR01687">
    <property type="entry name" value="moaD_arch"/>
    <property type="match status" value="1"/>
</dbReference>
<dbReference type="PANTHER" id="PTHR33359">
    <property type="entry name" value="MOLYBDOPTERIN SYNTHASE SULFUR CARRIER SUBUNIT"/>
    <property type="match status" value="1"/>
</dbReference>
<dbReference type="PANTHER" id="PTHR33359:SF1">
    <property type="entry name" value="MOLYBDOPTERIN SYNTHASE SULFUR CARRIER SUBUNIT"/>
    <property type="match status" value="1"/>
</dbReference>
<dbReference type="Pfam" id="PF02597">
    <property type="entry name" value="ThiS"/>
    <property type="match status" value="1"/>
</dbReference>
<dbReference type="SUPFAM" id="SSF54285">
    <property type="entry name" value="MoaD/ThiS"/>
    <property type="match status" value="1"/>
</dbReference>
<protein>
    <recommendedName>
        <fullName evidence="1">Molybdopterin synthase sulfur carrier subunit</fullName>
    </recommendedName>
    <alternativeName>
        <fullName evidence="1">Molybdenum cofactor synthesis protein 2 small subunit</fullName>
    </alternativeName>
    <alternativeName>
        <fullName evidence="1">Molybdenum cofactor synthesis protein 2A</fullName>
        <shortName evidence="1">MOCS2A</shortName>
    </alternativeName>
    <alternativeName>
        <fullName evidence="1">Sulfur carrier protein MOCS2A</fullName>
    </alternativeName>
</protein>
<organism>
    <name type="scientific">Chlamydomonas reinhardtii</name>
    <name type="common">Chlamydomonas smithii</name>
    <dbReference type="NCBI Taxonomy" id="3055"/>
    <lineage>
        <taxon>Eukaryota</taxon>
        <taxon>Viridiplantae</taxon>
        <taxon>Chlorophyta</taxon>
        <taxon>core chlorophytes</taxon>
        <taxon>Chlorophyceae</taxon>
        <taxon>CS clade</taxon>
        <taxon>Chlamydomonadales</taxon>
        <taxon>Chlamydomonadaceae</taxon>
        <taxon>Chlamydomonas</taxon>
    </lineage>
</organism>